<protein>
    <recommendedName>
        <fullName evidence="1">Co-chaperonin GroES</fullName>
    </recommendedName>
    <alternativeName>
        <fullName evidence="1">10 kDa chaperonin</fullName>
    </alternativeName>
    <alternativeName>
        <fullName evidence="1">Chaperonin-10</fullName>
        <shortName evidence="1">Cpn10</shortName>
    </alternativeName>
</protein>
<organism>
    <name type="scientific">Clavibacter michiganensis subsp. michiganensis (strain NCPPB 382)</name>
    <dbReference type="NCBI Taxonomy" id="443906"/>
    <lineage>
        <taxon>Bacteria</taxon>
        <taxon>Bacillati</taxon>
        <taxon>Actinomycetota</taxon>
        <taxon>Actinomycetes</taxon>
        <taxon>Micrococcales</taxon>
        <taxon>Microbacteriaceae</taxon>
        <taxon>Clavibacter</taxon>
    </lineage>
</organism>
<accession>A5CU64</accession>
<sequence length="98" mass="10534">MSVSIKPLEDRIVIQQVEAEQTTASGLVIPDTAKEKPQEGEVVAVGPGRIDDNGNRVPLDVAVGDKVIYSKYGGTEVKYDGQDLLVLSARDVLAVIER</sequence>
<name>CH10_CLAM3</name>
<comment type="function">
    <text evidence="1">Together with the chaperonin GroEL, plays an essential role in assisting protein folding. The GroEL-GroES system forms a nano-cage that allows encapsulation of the non-native substrate proteins and provides a physical environment optimized to promote and accelerate protein folding. GroES binds to the apical surface of the GroEL ring, thereby capping the opening of the GroEL channel.</text>
</comment>
<comment type="subunit">
    <text evidence="1">Heptamer of 7 subunits arranged in a ring. Interacts with the chaperonin GroEL.</text>
</comment>
<comment type="subcellular location">
    <subcellularLocation>
        <location evidence="1">Cytoplasm</location>
    </subcellularLocation>
</comment>
<comment type="similarity">
    <text evidence="1">Belongs to the GroES chaperonin family.</text>
</comment>
<dbReference type="EMBL" id="AM711867">
    <property type="protein sequence ID" value="CAN02651.1"/>
    <property type="molecule type" value="Genomic_DNA"/>
</dbReference>
<dbReference type="RefSeq" id="WP_012039257.1">
    <property type="nucleotide sequence ID" value="NC_009480.1"/>
</dbReference>
<dbReference type="SMR" id="A5CU64"/>
<dbReference type="GeneID" id="92984280"/>
<dbReference type="KEGG" id="cmi:CMM_2568"/>
<dbReference type="eggNOG" id="COG0234">
    <property type="taxonomic scope" value="Bacteria"/>
</dbReference>
<dbReference type="HOGENOM" id="CLU_132825_2_0_11"/>
<dbReference type="OrthoDB" id="9806791at2"/>
<dbReference type="Proteomes" id="UP000001564">
    <property type="component" value="Chromosome"/>
</dbReference>
<dbReference type="GO" id="GO:0005737">
    <property type="term" value="C:cytoplasm"/>
    <property type="evidence" value="ECO:0007669"/>
    <property type="project" value="UniProtKB-SubCell"/>
</dbReference>
<dbReference type="GO" id="GO:0005524">
    <property type="term" value="F:ATP binding"/>
    <property type="evidence" value="ECO:0007669"/>
    <property type="project" value="InterPro"/>
</dbReference>
<dbReference type="GO" id="GO:0046872">
    <property type="term" value="F:metal ion binding"/>
    <property type="evidence" value="ECO:0007669"/>
    <property type="project" value="TreeGrafter"/>
</dbReference>
<dbReference type="GO" id="GO:0044183">
    <property type="term" value="F:protein folding chaperone"/>
    <property type="evidence" value="ECO:0007669"/>
    <property type="project" value="InterPro"/>
</dbReference>
<dbReference type="GO" id="GO:0051087">
    <property type="term" value="F:protein-folding chaperone binding"/>
    <property type="evidence" value="ECO:0007669"/>
    <property type="project" value="TreeGrafter"/>
</dbReference>
<dbReference type="GO" id="GO:0051082">
    <property type="term" value="F:unfolded protein binding"/>
    <property type="evidence" value="ECO:0007669"/>
    <property type="project" value="TreeGrafter"/>
</dbReference>
<dbReference type="GO" id="GO:0051085">
    <property type="term" value="P:chaperone cofactor-dependent protein refolding"/>
    <property type="evidence" value="ECO:0007669"/>
    <property type="project" value="TreeGrafter"/>
</dbReference>
<dbReference type="CDD" id="cd00320">
    <property type="entry name" value="cpn10"/>
    <property type="match status" value="1"/>
</dbReference>
<dbReference type="FunFam" id="2.30.33.40:FF:000001">
    <property type="entry name" value="10 kDa chaperonin"/>
    <property type="match status" value="1"/>
</dbReference>
<dbReference type="Gene3D" id="2.30.33.40">
    <property type="entry name" value="GroES chaperonin"/>
    <property type="match status" value="1"/>
</dbReference>
<dbReference type="HAMAP" id="MF_00580">
    <property type="entry name" value="CH10"/>
    <property type="match status" value="1"/>
</dbReference>
<dbReference type="InterPro" id="IPR020818">
    <property type="entry name" value="Chaperonin_GroES"/>
</dbReference>
<dbReference type="InterPro" id="IPR037124">
    <property type="entry name" value="Chaperonin_GroES_sf"/>
</dbReference>
<dbReference type="InterPro" id="IPR018369">
    <property type="entry name" value="Chaprnonin_Cpn10_CS"/>
</dbReference>
<dbReference type="InterPro" id="IPR011032">
    <property type="entry name" value="GroES-like_sf"/>
</dbReference>
<dbReference type="NCBIfam" id="NF001527">
    <property type="entry name" value="PRK00364.1-2"/>
    <property type="match status" value="1"/>
</dbReference>
<dbReference type="NCBIfam" id="NF001530">
    <property type="entry name" value="PRK00364.1-6"/>
    <property type="match status" value="1"/>
</dbReference>
<dbReference type="NCBIfam" id="NF001531">
    <property type="entry name" value="PRK00364.2-2"/>
    <property type="match status" value="1"/>
</dbReference>
<dbReference type="NCBIfam" id="NF001533">
    <property type="entry name" value="PRK00364.2-4"/>
    <property type="match status" value="1"/>
</dbReference>
<dbReference type="NCBIfam" id="NF001534">
    <property type="entry name" value="PRK00364.2-5"/>
    <property type="match status" value="1"/>
</dbReference>
<dbReference type="PANTHER" id="PTHR10772">
    <property type="entry name" value="10 KDA HEAT SHOCK PROTEIN"/>
    <property type="match status" value="1"/>
</dbReference>
<dbReference type="PANTHER" id="PTHR10772:SF58">
    <property type="entry name" value="CO-CHAPERONIN GROES"/>
    <property type="match status" value="1"/>
</dbReference>
<dbReference type="Pfam" id="PF00166">
    <property type="entry name" value="Cpn10"/>
    <property type="match status" value="1"/>
</dbReference>
<dbReference type="PRINTS" id="PR00297">
    <property type="entry name" value="CHAPERONIN10"/>
</dbReference>
<dbReference type="SMART" id="SM00883">
    <property type="entry name" value="Cpn10"/>
    <property type="match status" value="1"/>
</dbReference>
<dbReference type="SUPFAM" id="SSF50129">
    <property type="entry name" value="GroES-like"/>
    <property type="match status" value="1"/>
</dbReference>
<dbReference type="PROSITE" id="PS00681">
    <property type="entry name" value="CHAPERONINS_CPN10"/>
    <property type="match status" value="1"/>
</dbReference>
<feature type="chain" id="PRO_1000025235" description="Co-chaperonin GroES">
    <location>
        <begin position="1"/>
        <end position="98"/>
    </location>
</feature>
<proteinExistence type="inferred from homology"/>
<reference key="1">
    <citation type="journal article" date="2008" name="J. Bacteriol.">
        <title>The genome sequence of the tomato-pathogenic actinomycete Clavibacter michiganensis subsp. michiganensis NCPPB382 reveals a large island involved in pathogenicity.</title>
        <authorList>
            <person name="Gartemann K.-H."/>
            <person name="Abt B."/>
            <person name="Bekel T."/>
            <person name="Burger A."/>
            <person name="Engemann J."/>
            <person name="Fluegel M."/>
            <person name="Gaigalat L."/>
            <person name="Goesmann A."/>
            <person name="Graefen I."/>
            <person name="Kalinowski J."/>
            <person name="Kaup O."/>
            <person name="Kirchner O."/>
            <person name="Krause L."/>
            <person name="Linke B."/>
            <person name="McHardy A."/>
            <person name="Meyer F."/>
            <person name="Pohle S."/>
            <person name="Rueckert C."/>
            <person name="Schneiker S."/>
            <person name="Zellermann E.-M."/>
            <person name="Puehler A."/>
            <person name="Eichenlaub R."/>
            <person name="Kaiser O."/>
            <person name="Bartels D."/>
        </authorList>
    </citation>
    <scope>NUCLEOTIDE SEQUENCE [LARGE SCALE GENOMIC DNA]</scope>
    <source>
        <strain>NCPPB 382</strain>
    </source>
</reference>
<keyword id="KW-0143">Chaperone</keyword>
<keyword id="KW-0963">Cytoplasm</keyword>
<evidence type="ECO:0000255" key="1">
    <source>
        <dbReference type="HAMAP-Rule" id="MF_00580"/>
    </source>
</evidence>
<gene>
    <name evidence="1" type="primary">groES</name>
    <name evidence="1" type="synonym">groS</name>
    <name type="ordered locus">CMM_2568</name>
</gene>